<gene>
    <name evidence="1" type="primary">iolD</name>
    <name type="ordered locus">RBAM_036750</name>
</gene>
<accession>A7ZAH8</accession>
<keyword id="KW-0378">Hydrolase</keyword>
<keyword id="KW-0460">Magnesium</keyword>
<keyword id="KW-0479">Metal-binding</keyword>
<keyword id="KW-0520">NAD</keyword>
<keyword id="KW-0786">Thiamine pyrophosphate</keyword>
<protein>
    <recommendedName>
        <fullName evidence="1">3D-(3,5/4)-trihydroxycyclohexane-1,2-dione hydrolase</fullName>
        <shortName evidence="1">THcHDO hydrolase</shortName>
        <ecNumber evidence="1">3.7.1.22</ecNumber>
    </recommendedName>
</protein>
<organism>
    <name type="scientific">Bacillus velezensis (strain DSM 23117 / BGSC 10A6 / LMG 26770 / FZB42)</name>
    <name type="common">Bacillus amyloliquefaciens subsp. plantarum</name>
    <dbReference type="NCBI Taxonomy" id="326423"/>
    <lineage>
        <taxon>Bacteria</taxon>
        <taxon>Bacillati</taxon>
        <taxon>Bacillota</taxon>
        <taxon>Bacilli</taxon>
        <taxon>Bacillales</taxon>
        <taxon>Bacillaceae</taxon>
        <taxon>Bacillus</taxon>
        <taxon>Bacillus amyloliquefaciens group</taxon>
    </lineage>
</organism>
<proteinExistence type="inferred from homology"/>
<feature type="chain" id="PRO_0000352528" description="3D-(3,5/4)-trihydroxycyclohexane-1,2-dione hydrolase">
    <location>
        <begin position="1"/>
        <end position="637"/>
    </location>
</feature>
<feature type="region of interest" description="Thiamine pyrophosphate binding" evidence="1">
    <location>
        <begin position="442"/>
        <end position="522"/>
    </location>
</feature>
<feature type="binding site" evidence="1">
    <location>
        <position position="66"/>
    </location>
    <ligand>
        <name>thiamine diphosphate</name>
        <dbReference type="ChEBI" id="CHEBI:58937"/>
    </ligand>
</feature>
<feature type="binding site" evidence="1">
    <location>
        <position position="493"/>
    </location>
    <ligand>
        <name>Mg(2+)</name>
        <dbReference type="ChEBI" id="CHEBI:18420"/>
    </ligand>
</feature>
<feature type="binding site" evidence="1">
    <location>
        <position position="520"/>
    </location>
    <ligand>
        <name>Mg(2+)</name>
        <dbReference type="ChEBI" id="CHEBI:18420"/>
    </ligand>
</feature>
<dbReference type="EC" id="3.7.1.22" evidence="1"/>
<dbReference type="EMBL" id="CP000560">
    <property type="protein sequence ID" value="ABS76004.1"/>
    <property type="molecule type" value="Genomic_DNA"/>
</dbReference>
<dbReference type="RefSeq" id="WP_012118845.1">
    <property type="nucleotide sequence ID" value="NC_009725.2"/>
</dbReference>
<dbReference type="SMR" id="A7ZAH8"/>
<dbReference type="GeneID" id="93082814"/>
<dbReference type="KEGG" id="bay:RBAM_036750"/>
<dbReference type="HOGENOM" id="CLU_013748_6_0_9"/>
<dbReference type="UniPathway" id="UPA00076">
    <property type="reaction ID" value="UER00145"/>
</dbReference>
<dbReference type="Proteomes" id="UP000001120">
    <property type="component" value="Chromosome"/>
</dbReference>
<dbReference type="GO" id="GO:0005948">
    <property type="term" value="C:acetolactate synthase complex"/>
    <property type="evidence" value="ECO:0007669"/>
    <property type="project" value="TreeGrafter"/>
</dbReference>
<dbReference type="GO" id="GO:0102481">
    <property type="term" value="F:3D-(3,5/4)-trihydroxycyclohexane-1,2-dione hydrolase activity"/>
    <property type="evidence" value="ECO:0007669"/>
    <property type="project" value="UniProtKB-EC"/>
</dbReference>
<dbReference type="GO" id="GO:0003984">
    <property type="term" value="F:acetolactate synthase activity"/>
    <property type="evidence" value="ECO:0007669"/>
    <property type="project" value="TreeGrafter"/>
</dbReference>
<dbReference type="GO" id="GO:0050660">
    <property type="term" value="F:flavin adenine dinucleotide binding"/>
    <property type="evidence" value="ECO:0007669"/>
    <property type="project" value="TreeGrafter"/>
</dbReference>
<dbReference type="GO" id="GO:0000287">
    <property type="term" value="F:magnesium ion binding"/>
    <property type="evidence" value="ECO:0007669"/>
    <property type="project" value="UniProtKB-UniRule"/>
</dbReference>
<dbReference type="GO" id="GO:0030976">
    <property type="term" value="F:thiamine pyrophosphate binding"/>
    <property type="evidence" value="ECO:0007669"/>
    <property type="project" value="UniProtKB-UniRule"/>
</dbReference>
<dbReference type="GO" id="GO:0019310">
    <property type="term" value="P:inositol catabolic process"/>
    <property type="evidence" value="ECO:0007669"/>
    <property type="project" value="UniProtKB-UniRule"/>
</dbReference>
<dbReference type="GO" id="GO:0009097">
    <property type="term" value="P:isoleucine biosynthetic process"/>
    <property type="evidence" value="ECO:0007669"/>
    <property type="project" value="TreeGrafter"/>
</dbReference>
<dbReference type="GO" id="GO:0009099">
    <property type="term" value="P:L-valine biosynthetic process"/>
    <property type="evidence" value="ECO:0007669"/>
    <property type="project" value="TreeGrafter"/>
</dbReference>
<dbReference type="CDD" id="cd02003">
    <property type="entry name" value="TPP_IolD"/>
    <property type="match status" value="1"/>
</dbReference>
<dbReference type="CDD" id="cd07035">
    <property type="entry name" value="TPP_PYR_POX_like"/>
    <property type="match status" value="1"/>
</dbReference>
<dbReference type="Gene3D" id="3.40.50.970">
    <property type="match status" value="2"/>
</dbReference>
<dbReference type="Gene3D" id="3.40.50.1220">
    <property type="entry name" value="TPP-binding domain"/>
    <property type="match status" value="1"/>
</dbReference>
<dbReference type="HAMAP" id="MF_01669">
    <property type="entry name" value="IolD"/>
    <property type="match status" value="1"/>
</dbReference>
<dbReference type="InterPro" id="IPR029035">
    <property type="entry name" value="DHS-like_NAD/FAD-binding_dom"/>
</dbReference>
<dbReference type="InterPro" id="IPR030817">
    <property type="entry name" value="Myo_inos_IolD"/>
</dbReference>
<dbReference type="InterPro" id="IPR023757">
    <property type="entry name" value="THcHDO_hydrolase_firmi"/>
</dbReference>
<dbReference type="InterPro" id="IPR029061">
    <property type="entry name" value="THDP-binding"/>
</dbReference>
<dbReference type="InterPro" id="IPR012000">
    <property type="entry name" value="Thiamin_PyroP_enz_cen_dom"/>
</dbReference>
<dbReference type="InterPro" id="IPR012001">
    <property type="entry name" value="Thiamin_PyroP_enz_TPP-bd_dom"/>
</dbReference>
<dbReference type="InterPro" id="IPR000399">
    <property type="entry name" value="TPP-bd_CS"/>
</dbReference>
<dbReference type="InterPro" id="IPR045229">
    <property type="entry name" value="TPP_enz"/>
</dbReference>
<dbReference type="InterPro" id="IPR011766">
    <property type="entry name" value="TPP_enzyme_TPP-bd"/>
</dbReference>
<dbReference type="NCBIfam" id="TIGR04377">
    <property type="entry name" value="myo_inos_iolD"/>
    <property type="match status" value="1"/>
</dbReference>
<dbReference type="PANTHER" id="PTHR18968:SF9">
    <property type="entry name" value="3D-(3,5_4)-TRIHYDROXYCYCLOHEXANE-1,2-DIONE HYDROLASE"/>
    <property type="match status" value="1"/>
</dbReference>
<dbReference type="PANTHER" id="PTHR18968">
    <property type="entry name" value="THIAMINE PYROPHOSPHATE ENZYMES"/>
    <property type="match status" value="1"/>
</dbReference>
<dbReference type="Pfam" id="PF02775">
    <property type="entry name" value="TPP_enzyme_C"/>
    <property type="match status" value="1"/>
</dbReference>
<dbReference type="Pfam" id="PF00205">
    <property type="entry name" value="TPP_enzyme_M"/>
    <property type="match status" value="1"/>
</dbReference>
<dbReference type="Pfam" id="PF02776">
    <property type="entry name" value="TPP_enzyme_N"/>
    <property type="match status" value="1"/>
</dbReference>
<dbReference type="SUPFAM" id="SSF52467">
    <property type="entry name" value="DHS-like NAD/FAD-binding domain"/>
    <property type="match status" value="1"/>
</dbReference>
<dbReference type="SUPFAM" id="SSF52518">
    <property type="entry name" value="Thiamin diphosphate-binding fold (THDP-binding)"/>
    <property type="match status" value="2"/>
</dbReference>
<dbReference type="PROSITE" id="PS00187">
    <property type="entry name" value="TPP_ENZYMES"/>
    <property type="match status" value="1"/>
</dbReference>
<comment type="function">
    <text evidence="1">Involved in the cleavage of the C1-C2 bond of 3D-(3,5/4)-trihydroxycyclohexane-1,2-dione (THcHDO) to yield 5-deoxy-glucuronate (5DG).</text>
</comment>
<comment type="catalytic activity">
    <reaction evidence="1">
        <text>3D-3,5/4-trihydroxycyclohexane-1,2-dione + H2O = 5-deoxy-D-glucuronate + H(+)</text>
        <dbReference type="Rhea" id="RHEA:25836"/>
        <dbReference type="ChEBI" id="CHEBI:15377"/>
        <dbReference type="ChEBI" id="CHEBI:15378"/>
        <dbReference type="ChEBI" id="CHEBI:28446"/>
        <dbReference type="ChEBI" id="CHEBI:58852"/>
        <dbReference type="EC" id="3.7.1.22"/>
    </reaction>
</comment>
<comment type="cofactor">
    <cofactor evidence="1">
        <name>Mg(2+)</name>
        <dbReference type="ChEBI" id="CHEBI:18420"/>
    </cofactor>
    <text evidence="1">Binds 1 Mg(2+) ion per subunit.</text>
</comment>
<comment type="cofactor">
    <cofactor evidence="1">
        <name>thiamine diphosphate</name>
        <dbReference type="ChEBI" id="CHEBI:58937"/>
    </cofactor>
    <text evidence="1">Binds 1 thiamine pyrophosphate per subunit.</text>
</comment>
<comment type="pathway">
    <text evidence="1">Polyol metabolism; myo-inositol degradation into acetyl-CoA; acetyl-CoA from myo-inositol: step 3/7.</text>
</comment>
<comment type="similarity">
    <text evidence="1">Belongs to the TPP enzyme family.</text>
</comment>
<evidence type="ECO:0000255" key="1">
    <source>
        <dbReference type="HAMAP-Rule" id="MF_01669"/>
    </source>
</evidence>
<reference key="1">
    <citation type="journal article" date="2007" name="Nat. Biotechnol.">
        <title>Comparative analysis of the complete genome sequence of the plant growth-promoting bacterium Bacillus amyloliquefaciens FZB42.</title>
        <authorList>
            <person name="Chen X.H."/>
            <person name="Koumoutsi A."/>
            <person name="Scholz R."/>
            <person name="Eisenreich A."/>
            <person name="Schneider K."/>
            <person name="Heinemeyer I."/>
            <person name="Morgenstern B."/>
            <person name="Voss B."/>
            <person name="Hess W.R."/>
            <person name="Reva O."/>
            <person name="Junge H."/>
            <person name="Voigt B."/>
            <person name="Jungblut P.R."/>
            <person name="Vater J."/>
            <person name="Suessmuth R."/>
            <person name="Liesegang H."/>
            <person name="Strittmatter A."/>
            <person name="Gottschalk G."/>
            <person name="Borriss R."/>
        </authorList>
    </citation>
    <scope>NUCLEOTIDE SEQUENCE [LARGE SCALE GENOMIC DNA]</scope>
    <source>
        <strain>DSM 23117 / BGSC 10A6 / LMG 26770 / FZB42</strain>
    </source>
</reference>
<sequence>MGKTIRLTTAQALIQFLNRQYIHVDGKEEPFVEGIFTIFGHGNVLGIGQALEQDAGHLKVYQGKNEQGMAHAAMAYSKQMLRRKIYAVSTSVGPGAANLTAAAGTALANHIPVLLLPADTFATRQPDPVLQQVEQEYSAAVTTNDALKPVSRYWDRITRPEQLMSSLIRAFEVMTDPAKAGPATICISQDVEGEAFDFDESFFEKRVHYIDRMQPSERELKGAAERIKQSSRPVILVGGGAKYSGAREELIALSETYGIPLVETQAGKSTVEADFANNLGGMGITGTLAANKAARQADLIIGVGTRYTDFATSSKTAFDFDKAKFLNINVSRMQAYKLDAFQVVADAKVTLGRLHGLLDGYKSAFGTAIKDWKDEWQAERDRLGKVTFTRDAFEPEIKNHFSQDVLNEYADALGTELPQTTALLTINDTIPEDSVVISSAGSLPGDLQRLWHSNVPNTYHLEYGYSCMGYEVSGTLGLKLAHPDKEVYSLVGDGSFLMLHSELITALQYNKKINVLLFDNSGFGCINNLQMDHGSGSYFCEFRTEDNQILNVDYAKVAEGYGAKTYRANTVEELKAALEDAKTQDVSTLIEMKVLPKTMTDGYDSWWHVGVAEVSEQKSVQRAYEAKETKLKSAKQY</sequence>
<name>IOLD_BACVZ</name>